<comment type="function">
    <text evidence="1">Catalyzes the interconversion of 2-phosphoglycerate and 3-phosphoglycerate.</text>
</comment>
<comment type="catalytic activity">
    <reaction evidence="1">
        <text>(2R)-2-phosphoglycerate = (2R)-3-phosphoglycerate</text>
        <dbReference type="Rhea" id="RHEA:15901"/>
        <dbReference type="ChEBI" id="CHEBI:58272"/>
        <dbReference type="ChEBI" id="CHEBI:58289"/>
        <dbReference type="EC" id="5.4.2.11"/>
    </reaction>
</comment>
<comment type="pathway">
    <text evidence="1">Carbohydrate degradation; glycolysis; pyruvate from D-glyceraldehyde 3-phosphate: step 3/5.</text>
</comment>
<comment type="similarity">
    <text evidence="1">Belongs to the phosphoglycerate mutase family. BPG-dependent PGAM subfamily.</text>
</comment>
<dbReference type="EC" id="5.4.2.11" evidence="1"/>
<dbReference type="EMBL" id="CP000607">
    <property type="protein sequence ID" value="ABP36579.1"/>
    <property type="molecule type" value="Genomic_DNA"/>
</dbReference>
<dbReference type="SMR" id="A4SDM0"/>
<dbReference type="STRING" id="290318.Cvib_0557"/>
<dbReference type="KEGG" id="pvi:Cvib_0557"/>
<dbReference type="eggNOG" id="COG0588">
    <property type="taxonomic scope" value="Bacteria"/>
</dbReference>
<dbReference type="HOGENOM" id="CLU_033323_1_1_10"/>
<dbReference type="OrthoDB" id="9782128at2"/>
<dbReference type="UniPathway" id="UPA00109">
    <property type="reaction ID" value="UER00186"/>
</dbReference>
<dbReference type="GO" id="GO:0004619">
    <property type="term" value="F:phosphoglycerate mutase activity"/>
    <property type="evidence" value="ECO:0007669"/>
    <property type="project" value="UniProtKB-EC"/>
</dbReference>
<dbReference type="GO" id="GO:0006094">
    <property type="term" value="P:gluconeogenesis"/>
    <property type="evidence" value="ECO:0007669"/>
    <property type="project" value="UniProtKB-UniRule"/>
</dbReference>
<dbReference type="GO" id="GO:0006096">
    <property type="term" value="P:glycolytic process"/>
    <property type="evidence" value="ECO:0007669"/>
    <property type="project" value="UniProtKB-UniRule"/>
</dbReference>
<dbReference type="CDD" id="cd07067">
    <property type="entry name" value="HP_PGM_like"/>
    <property type="match status" value="1"/>
</dbReference>
<dbReference type="FunFam" id="3.40.50.1240:FF:000003">
    <property type="entry name" value="2,3-bisphosphoglycerate-dependent phosphoglycerate mutase"/>
    <property type="match status" value="1"/>
</dbReference>
<dbReference type="Gene3D" id="3.40.50.1240">
    <property type="entry name" value="Phosphoglycerate mutase-like"/>
    <property type="match status" value="1"/>
</dbReference>
<dbReference type="HAMAP" id="MF_01039">
    <property type="entry name" value="PGAM_GpmA"/>
    <property type="match status" value="1"/>
</dbReference>
<dbReference type="InterPro" id="IPR013078">
    <property type="entry name" value="His_Pase_superF_clade-1"/>
</dbReference>
<dbReference type="InterPro" id="IPR029033">
    <property type="entry name" value="His_PPase_superfam"/>
</dbReference>
<dbReference type="InterPro" id="IPR001345">
    <property type="entry name" value="PG/BPGM_mutase_AS"/>
</dbReference>
<dbReference type="InterPro" id="IPR005952">
    <property type="entry name" value="Phosphogly_mut1"/>
</dbReference>
<dbReference type="NCBIfam" id="TIGR01258">
    <property type="entry name" value="pgm_1"/>
    <property type="match status" value="1"/>
</dbReference>
<dbReference type="NCBIfam" id="NF010713">
    <property type="entry name" value="PRK14115.1"/>
    <property type="match status" value="1"/>
</dbReference>
<dbReference type="PANTHER" id="PTHR11931">
    <property type="entry name" value="PHOSPHOGLYCERATE MUTASE"/>
    <property type="match status" value="1"/>
</dbReference>
<dbReference type="Pfam" id="PF00300">
    <property type="entry name" value="His_Phos_1"/>
    <property type="match status" value="2"/>
</dbReference>
<dbReference type="PIRSF" id="PIRSF000709">
    <property type="entry name" value="6PFK_2-Ptase"/>
    <property type="match status" value="1"/>
</dbReference>
<dbReference type="SMART" id="SM00855">
    <property type="entry name" value="PGAM"/>
    <property type="match status" value="1"/>
</dbReference>
<dbReference type="SUPFAM" id="SSF53254">
    <property type="entry name" value="Phosphoglycerate mutase-like"/>
    <property type="match status" value="1"/>
</dbReference>
<dbReference type="PROSITE" id="PS00175">
    <property type="entry name" value="PG_MUTASE"/>
    <property type="match status" value="1"/>
</dbReference>
<gene>
    <name evidence="1" type="primary">gpmA</name>
    <name type="ordered locus">Cvib_0557</name>
</gene>
<proteinExistence type="inferred from homology"/>
<keyword id="KW-0312">Gluconeogenesis</keyword>
<keyword id="KW-0324">Glycolysis</keyword>
<keyword id="KW-0413">Isomerase</keyword>
<accession>A4SDM0</accession>
<evidence type="ECO:0000255" key="1">
    <source>
        <dbReference type="HAMAP-Rule" id="MF_01039"/>
    </source>
</evidence>
<feature type="chain" id="PRO_1000084328" description="2,3-bisphosphoglycerate-dependent phosphoglycerate mutase">
    <location>
        <begin position="1"/>
        <end position="247"/>
    </location>
</feature>
<feature type="active site" description="Tele-phosphohistidine intermediate" evidence="1">
    <location>
        <position position="9"/>
    </location>
</feature>
<feature type="active site" description="Proton donor/acceptor" evidence="1">
    <location>
        <position position="87"/>
    </location>
</feature>
<feature type="binding site" evidence="1">
    <location>
        <begin position="8"/>
        <end position="15"/>
    </location>
    <ligand>
        <name>substrate</name>
    </ligand>
</feature>
<feature type="binding site" evidence="1">
    <location>
        <begin position="21"/>
        <end position="22"/>
    </location>
    <ligand>
        <name>substrate</name>
    </ligand>
</feature>
<feature type="binding site" evidence="1">
    <location>
        <position position="60"/>
    </location>
    <ligand>
        <name>substrate</name>
    </ligand>
</feature>
<feature type="binding site" evidence="1">
    <location>
        <begin position="87"/>
        <end position="90"/>
    </location>
    <ligand>
        <name>substrate</name>
    </ligand>
</feature>
<feature type="binding site" evidence="1">
    <location>
        <position position="98"/>
    </location>
    <ligand>
        <name>substrate</name>
    </ligand>
</feature>
<feature type="binding site" evidence="1">
    <location>
        <begin position="114"/>
        <end position="115"/>
    </location>
    <ligand>
        <name>substrate</name>
    </ligand>
</feature>
<feature type="binding site" evidence="1">
    <location>
        <begin position="183"/>
        <end position="184"/>
    </location>
    <ligand>
        <name>substrate</name>
    </ligand>
</feature>
<feature type="site" description="Transition state stabilizer" evidence="1">
    <location>
        <position position="182"/>
    </location>
</feature>
<reference key="1">
    <citation type="submission" date="2007-03" db="EMBL/GenBank/DDBJ databases">
        <title>Complete sequence of Prosthecochloris vibrioformis DSM 265.</title>
        <authorList>
            <consortium name="US DOE Joint Genome Institute"/>
            <person name="Copeland A."/>
            <person name="Lucas S."/>
            <person name="Lapidus A."/>
            <person name="Barry K."/>
            <person name="Detter J.C."/>
            <person name="Glavina del Rio T."/>
            <person name="Hammon N."/>
            <person name="Israni S."/>
            <person name="Pitluck S."/>
            <person name="Schmutz J."/>
            <person name="Larimer F."/>
            <person name="Land M."/>
            <person name="Hauser L."/>
            <person name="Mikhailova N."/>
            <person name="Li T."/>
            <person name="Overmann J."/>
            <person name="Schuster S.C."/>
            <person name="Bryant D.A."/>
            <person name="Richardson P."/>
        </authorList>
    </citation>
    <scope>NUCLEOTIDE SEQUENCE [LARGE SCALE GENOMIC DNA]</scope>
    <source>
        <strain>DSM 265 / 1930</strain>
    </source>
</reference>
<protein>
    <recommendedName>
        <fullName evidence="1">2,3-bisphosphoglycerate-dependent phosphoglycerate mutase</fullName>
        <shortName evidence="1">BPG-dependent PGAM</shortName>
        <shortName evidence="1">PGAM</shortName>
        <shortName evidence="1">Phosphoglyceromutase</shortName>
        <shortName evidence="1">dPGM</shortName>
        <ecNumber evidence="1">5.4.2.11</ecNumber>
    </recommendedName>
</protein>
<organism>
    <name type="scientific">Chlorobium phaeovibrioides (strain DSM 265 / 1930)</name>
    <name type="common">Prosthecochloris vibrioformis (strain DSM 265)</name>
    <dbReference type="NCBI Taxonomy" id="290318"/>
    <lineage>
        <taxon>Bacteria</taxon>
        <taxon>Pseudomonadati</taxon>
        <taxon>Chlorobiota</taxon>
        <taxon>Chlorobiia</taxon>
        <taxon>Chlorobiales</taxon>
        <taxon>Chlorobiaceae</taxon>
        <taxon>Chlorobium/Pelodictyon group</taxon>
        <taxon>Chlorobium</taxon>
    </lineage>
</organism>
<sequence length="247" mass="28213">MIKLVLLRHGESQWNLDNRFTGWHDIDLTDKGRREASNAGKLLCEAGFEFDVAYVSVLKRAIRTLWNVLDEMNLMWIPVIRNWRLNERHYGALQGLNKAETAQKYGDEQVLVWRRSYDTPPPPLERTDERWPGSDRRYAALDADEVPLTECLKDTVARFLPFWHETIAPEISKGRNVLIVAHGNSLRALVKYLDGISEEDIVGLNIPTGIPLVYELDDNLKPLKSYYLGDQEELKKAVDAVAGQGKA</sequence>
<name>GPMA_CHLPM</name>